<reference key="1">
    <citation type="submission" date="1989-03" db="EMBL/GenBank/DDBJ databases">
        <authorList>
            <person name="Neumann H."/>
        </authorList>
    </citation>
    <scope>NUCLEOTIDE SEQUENCE [GENOMIC DNA]</scope>
</reference>
<keyword id="KW-1185">Reference proteome</keyword>
<protein>
    <recommendedName>
        <fullName>Uncharacterized 11.5 kDa protein</fullName>
    </recommendedName>
</protein>
<dbReference type="EMBL" id="X14855">
    <property type="protein sequence ID" value="CAA32980.1"/>
    <property type="molecule type" value="Genomic_DNA"/>
</dbReference>
<dbReference type="SMR" id="P19286"/>
<dbReference type="Proteomes" id="UP000009250">
    <property type="component" value="Genome"/>
</dbReference>
<accession>P19286</accession>
<proteinExistence type="predicted"/>
<name>YORB_TTV1K</name>
<organism>
    <name type="scientific">Thermoproteus tenax virus 1 (strain KRA1)</name>
    <name type="common">TTV1</name>
    <dbReference type="NCBI Taxonomy" id="10480"/>
    <lineage>
        <taxon>Viruses</taxon>
        <taxon>Adnaviria</taxon>
        <taxon>Zilligvirae</taxon>
        <taxon>Taleaviricota</taxon>
        <taxon>Tokiviricetes</taxon>
        <taxon>Primavirales</taxon>
        <taxon>Tristromaviridae</taxon>
        <taxon>Betatristromavirus</taxon>
        <taxon>Betatristromavirus TTV1</taxon>
    </lineage>
</organism>
<organismHost>
    <name type="scientific">Thermoproteus tenax</name>
    <dbReference type="NCBI Taxonomy" id="2271"/>
</organismHost>
<sequence>MRVYTIRDDRIVYLGEYELVPMPKLEDDIAAIKGSIIAYVLNSNYSSFIGALKDTKEMELIENLAYELHQNIDRTPTLTRYYYLLMKVYGMHGSILSQF</sequence>
<feature type="chain" id="PRO_0000222968" description="Uncharacterized 11.5 kDa protein">
    <location>
        <begin position="1"/>
        <end position="99"/>
    </location>
</feature>